<protein>
    <recommendedName>
        <fullName>Apolipoprotein E</fullName>
        <shortName>Apo-E</shortName>
    </recommendedName>
</protein>
<reference key="1">
    <citation type="journal article" date="1990" name="Nucleic Acids Res.">
        <title>Primary structure of guinea pig apolipoprotein E.</title>
        <authorList>
            <person name="Matsushima T."/>
            <person name="Getz G.S."/>
            <person name="Meredith S.C."/>
        </authorList>
    </citation>
    <scope>NUCLEOTIDE SEQUENCE</scope>
</reference>
<name>APOE_CAVPO</name>
<keyword id="KW-0162">Chylomicron</keyword>
<keyword id="KW-0967">Endosome</keyword>
<keyword id="KW-0272">Extracellular matrix</keyword>
<keyword id="KW-0325">Glycoprotein</keyword>
<keyword id="KW-0345">HDL</keyword>
<keyword id="KW-0358">Heparin-binding</keyword>
<keyword id="KW-0445">Lipid transport</keyword>
<keyword id="KW-0446">Lipid-binding</keyword>
<keyword id="KW-0558">Oxidation</keyword>
<keyword id="KW-0597">Phosphoprotein</keyword>
<keyword id="KW-1185">Reference proteome</keyword>
<keyword id="KW-0677">Repeat</keyword>
<keyword id="KW-0964">Secreted</keyword>
<keyword id="KW-0732">Signal</keyword>
<keyword id="KW-0813">Transport</keyword>
<keyword id="KW-0850">VLDL</keyword>
<evidence type="ECO:0000250" key="1">
    <source>
        <dbReference type="UniProtKB" id="P02649"/>
    </source>
</evidence>
<evidence type="ECO:0000250" key="2">
    <source>
        <dbReference type="UniProtKB" id="P08226"/>
    </source>
</evidence>
<evidence type="ECO:0000255" key="3"/>
<evidence type="ECO:0000305" key="4"/>
<feature type="signal peptide" evidence="3">
    <location>
        <begin position="1"/>
        <end position="18"/>
    </location>
</feature>
<feature type="chain" id="PRO_0000001985" description="Apolipoprotein E">
    <location>
        <begin position="19"/>
        <end position="298"/>
    </location>
</feature>
<feature type="repeat" description="1">
    <location>
        <begin position="74"/>
        <end position="95"/>
    </location>
</feature>
<feature type="repeat" description="2">
    <location>
        <begin position="96"/>
        <end position="117"/>
    </location>
</feature>
<feature type="repeat" description="3">
    <location>
        <begin position="118"/>
        <end position="139"/>
    </location>
</feature>
<feature type="repeat" description="4">
    <location>
        <begin position="140"/>
        <end position="161"/>
    </location>
</feature>
<feature type="repeat" description="5">
    <location>
        <begin position="162"/>
        <end position="183"/>
    </location>
</feature>
<feature type="repeat" description="6">
    <location>
        <begin position="184"/>
        <end position="204"/>
    </location>
</feature>
<feature type="repeat" description="7">
    <location>
        <begin position="205"/>
        <end position="222"/>
    </location>
</feature>
<feature type="repeat" description="8">
    <location>
        <begin position="223"/>
        <end position="244"/>
    </location>
</feature>
<feature type="region of interest" description="8 X 22 AA approximate tandem repeats">
    <location>
        <begin position="74"/>
        <end position="244"/>
    </location>
</feature>
<feature type="region of interest" description="LDL and other lipoprotein receptors binding" evidence="1">
    <location>
        <begin position="152"/>
        <end position="162"/>
    </location>
</feature>
<feature type="region of interest" description="Specificity for association with VLDL" evidence="1">
    <location>
        <begin position="260"/>
        <end position="272"/>
    </location>
</feature>
<feature type="binding site" evidence="1">
    <location>
        <begin position="156"/>
        <end position="159"/>
    </location>
    <ligand>
        <name>heparin</name>
        <dbReference type="ChEBI" id="CHEBI:28304"/>
    </ligand>
</feature>
<feature type="binding site" evidence="1">
    <location>
        <begin position="218"/>
        <end position="225"/>
    </location>
    <ligand>
        <name>heparin</name>
        <dbReference type="ChEBI" id="CHEBI:28304"/>
    </ligand>
</feature>
<feature type="modified residue" description="Methionine sulfoxide" evidence="2">
    <location>
        <position position="137"/>
    </location>
</feature>
<feature type="modified residue" description="Phosphoserine" evidence="1">
    <location>
        <position position="141"/>
    </location>
</feature>
<gene>
    <name type="primary">APOE</name>
</gene>
<sequence>MKVLWAALVVTLLAGCRADVEPEVEVREPAVWQSGQPWELALSRFWDYLRWVQTLSDQVQEELLSNQVTQELTLLIEDTMKEVKAYKAELEKELGPVAEDTKARLAKELQAAQARLGADMEEVRNRLSQYRSEVQAMLGQSSEELRARLTSHPRKMKRRLQRDIDELQKRMAVYKAGAQEGAERGVSAIRERLGSLIEQGRLQALASQPLQERAQAWGEQMRGRLEKVGSQARDRLEEVREQMEEVRVKVEEQAEAFQARLKSWFEPMMEDMRRQWAELIQKVQVAVGASTSAPSQEP</sequence>
<dbReference type="PIR" id="S12635">
    <property type="entry name" value="S12635"/>
</dbReference>
<dbReference type="SMR" id="P23529"/>
<dbReference type="FunCoup" id="P23529">
    <property type="interactions" value="204"/>
</dbReference>
<dbReference type="STRING" id="10141.ENSCPOP00000006519"/>
<dbReference type="eggNOG" id="ENOG502QVD6">
    <property type="taxonomic scope" value="Eukaryota"/>
</dbReference>
<dbReference type="InParanoid" id="P23529"/>
<dbReference type="Proteomes" id="UP000005447">
    <property type="component" value="Unassembled WGS sequence"/>
</dbReference>
<dbReference type="GO" id="GO:0042627">
    <property type="term" value="C:chylomicron"/>
    <property type="evidence" value="ECO:0007669"/>
    <property type="project" value="UniProtKB-KW"/>
</dbReference>
<dbReference type="GO" id="GO:0070062">
    <property type="term" value="C:extracellular exosome"/>
    <property type="evidence" value="ECO:0000250"/>
    <property type="project" value="UniProtKB"/>
</dbReference>
<dbReference type="GO" id="GO:0031012">
    <property type="term" value="C:extracellular matrix"/>
    <property type="evidence" value="ECO:0000250"/>
    <property type="project" value="UniProtKB"/>
</dbReference>
<dbReference type="GO" id="GO:0005615">
    <property type="term" value="C:extracellular space"/>
    <property type="evidence" value="ECO:0000250"/>
    <property type="project" value="UniProtKB"/>
</dbReference>
<dbReference type="GO" id="GO:0034364">
    <property type="term" value="C:high-density lipoprotein particle"/>
    <property type="evidence" value="ECO:0000250"/>
    <property type="project" value="UniProtKB"/>
</dbReference>
<dbReference type="GO" id="GO:0034363">
    <property type="term" value="C:intermediate-density lipoprotein particle"/>
    <property type="evidence" value="ECO:0000250"/>
    <property type="project" value="UniProtKB"/>
</dbReference>
<dbReference type="GO" id="GO:0034362">
    <property type="term" value="C:low-density lipoprotein particle"/>
    <property type="evidence" value="ECO:0000250"/>
    <property type="project" value="UniProtKB"/>
</dbReference>
<dbReference type="GO" id="GO:0097487">
    <property type="term" value="C:multivesicular body, internal vesicle"/>
    <property type="evidence" value="ECO:0000250"/>
    <property type="project" value="UniProtKB"/>
</dbReference>
<dbReference type="GO" id="GO:0034361">
    <property type="term" value="C:very-low-density lipoprotein particle"/>
    <property type="evidence" value="ECO:0000250"/>
    <property type="project" value="UniProtKB"/>
</dbReference>
<dbReference type="GO" id="GO:0120020">
    <property type="term" value="F:cholesterol transfer activity"/>
    <property type="evidence" value="ECO:0007669"/>
    <property type="project" value="TreeGrafter"/>
</dbReference>
<dbReference type="GO" id="GO:0043395">
    <property type="term" value="F:heparan sulfate proteoglycan binding"/>
    <property type="evidence" value="ECO:0000250"/>
    <property type="project" value="UniProtKB"/>
</dbReference>
<dbReference type="GO" id="GO:0008201">
    <property type="term" value="F:heparin binding"/>
    <property type="evidence" value="ECO:0000250"/>
    <property type="project" value="UniProtKB"/>
</dbReference>
<dbReference type="GO" id="GO:0042802">
    <property type="term" value="F:identical protein binding"/>
    <property type="evidence" value="ECO:0000250"/>
    <property type="project" value="UniProtKB"/>
</dbReference>
<dbReference type="GO" id="GO:0050750">
    <property type="term" value="F:low-density lipoprotein particle receptor binding"/>
    <property type="evidence" value="ECO:0000250"/>
    <property type="project" value="UniProtKB"/>
</dbReference>
<dbReference type="GO" id="GO:0060228">
    <property type="term" value="F:phosphatidylcholine-sterol O-acyltransferase activator activity"/>
    <property type="evidence" value="ECO:0007669"/>
    <property type="project" value="TreeGrafter"/>
</dbReference>
<dbReference type="GO" id="GO:0005543">
    <property type="term" value="F:phospholipid binding"/>
    <property type="evidence" value="ECO:0007669"/>
    <property type="project" value="TreeGrafter"/>
</dbReference>
<dbReference type="GO" id="GO:0055090">
    <property type="term" value="P:acylglycerol homeostasis"/>
    <property type="evidence" value="ECO:0007669"/>
    <property type="project" value="TreeGrafter"/>
</dbReference>
<dbReference type="GO" id="GO:0033344">
    <property type="term" value="P:cholesterol efflux"/>
    <property type="evidence" value="ECO:0000250"/>
    <property type="project" value="UniProtKB"/>
</dbReference>
<dbReference type="GO" id="GO:0008203">
    <property type="term" value="P:cholesterol metabolic process"/>
    <property type="evidence" value="ECO:0007669"/>
    <property type="project" value="TreeGrafter"/>
</dbReference>
<dbReference type="GO" id="GO:0034382">
    <property type="term" value="P:chylomicron remnant clearance"/>
    <property type="evidence" value="ECO:0000250"/>
    <property type="project" value="UniProtKB"/>
</dbReference>
<dbReference type="GO" id="GO:0034380">
    <property type="term" value="P:high-density lipoprotein particle assembly"/>
    <property type="evidence" value="ECO:0000250"/>
    <property type="project" value="UniProtKB"/>
</dbReference>
<dbReference type="GO" id="GO:0071831">
    <property type="term" value="P:intermediate-density lipoprotein particle clearance"/>
    <property type="evidence" value="ECO:0000250"/>
    <property type="project" value="UniProtKB"/>
</dbReference>
<dbReference type="GO" id="GO:0042158">
    <property type="term" value="P:lipoprotein biosynthetic process"/>
    <property type="evidence" value="ECO:0000250"/>
    <property type="project" value="UniProtKB"/>
</dbReference>
<dbReference type="GO" id="GO:0032438">
    <property type="term" value="P:melanosome organization"/>
    <property type="evidence" value="ECO:0000250"/>
    <property type="project" value="UniProtKB"/>
</dbReference>
<dbReference type="GO" id="GO:1905907">
    <property type="term" value="P:negative regulation of amyloid fibril formation"/>
    <property type="evidence" value="ECO:0000250"/>
    <property type="project" value="UniProtKB"/>
</dbReference>
<dbReference type="GO" id="GO:0033700">
    <property type="term" value="P:phospholipid efflux"/>
    <property type="evidence" value="ECO:0007669"/>
    <property type="project" value="TreeGrafter"/>
</dbReference>
<dbReference type="GO" id="GO:1900223">
    <property type="term" value="P:positive regulation of amyloid-beta clearance"/>
    <property type="evidence" value="ECO:0000250"/>
    <property type="project" value="UniProtKB"/>
</dbReference>
<dbReference type="GO" id="GO:0071830">
    <property type="term" value="P:triglyceride-rich lipoprotein particle clearance"/>
    <property type="evidence" value="ECO:0000250"/>
    <property type="project" value="UniProtKB"/>
</dbReference>
<dbReference type="GO" id="GO:0034447">
    <property type="term" value="P:very-low-density lipoprotein particle clearance"/>
    <property type="evidence" value="ECO:0000250"/>
    <property type="project" value="UniProtKB"/>
</dbReference>
<dbReference type="FunFam" id="1.20.120.20:FF:000002">
    <property type="entry name" value="Apolipoprotein E"/>
    <property type="match status" value="1"/>
</dbReference>
<dbReference type="FunFam" id="1.20.120.20:FF:000003">
    <property type="entry name" value="Apolipoprotein E"/>
    <property type="match status" value="1"/>
</dbReference>
<dbReference type="Gene3D" id="1.20.120.20">
    <property type="entry name" value="Apolipoprotein"/>
    <property type="match status" value="2"/>
</dbReference>
<dbReference type="InterPro" id="IPR000074">
    <property type="entry name" value="ApoA_E"/>
</dbReference>
<dbReference type="InterPro" id="IPR050163">
    <property type="entry name" value="Apolipoprotein_A1/A4/E"/>
</dbReference>
<dbReference type="PANTHER" id="PTHR18976">
    <property type="entry name" value="APOLIPOPROTEIN"/>
    <property type="match status" value="1"/>
</dbReference>
<dbReference type="PANTHER" id="PTHR18976:SF2">
    <property type="entry name" value="APOLIPOPROTEIN E"/>
    <property type="match status" value="1"/>
</dbReference>
<dbReference type="Pfam" id="PF01442">
    <property type="entry name" value="Apolipoprotein"/>
    <property type="match status" value="1"/>
</dbReference>
<dbReference type="SUPFAM" id="SSF58113">
    <property type="entry name" value="Apolipoprotein A-I"/>
    <property type="match status" value="1"/>
</dbReference>
<proteinExistence type="inferred from homology"/>
<accession>P23529</accession>
<organism>
    <name type="scientific">Cavia porcellus</name>
    <name type="common">Guinea pig</name>
    <dbReference type="NCBI Taxonomy" id="10141"/>
    <lineage>
        <taxon>Eukaryota</taxon>
        <taxon>Metazoa</taxon>
        <taxon>Chordata</taxon>
        <taxon>Craniata</taxon>
        <taxon>Vertebrata</taxon>
        <taxon>Euteleostomi</taxon>
        <taxon>Mammalia</taxon>
        <taxon>Eutheria</taxon>
        <taxon>Euarchontoglires</taxon>
        <taxon>Glires</taxon>
        <taxon>Rodentia</taxon>
        <taxon>Hystricomorpha</taxon>
        <taxon>Caviidae</taxon>
        <taxon>Cavia</taxon>
    </lineage>
</organism>
<comment type="function">
    <text evidence="1">APOE is an apolipoprotein, a protein associating with lipid particles, that mainly functions in lipoprotein-mediated lipid transport between organs via the plasma and interstitial fluids. APOE is a core component of plasma lipoproteins and is involved in their production, conversion and clearance. Apolipoproteins are amphipathic molecules that interact both with lipids of the lipoprotein particle core and the aqueous environment of the plasma. As such, APOE associates with chylomicrons, chylomicron remnants, very low density lipoproteins (VLDL) and intermediate density lipoproteins (IDL) but shows a preferential binding to high-density lipoproteins (HDL). It also binds a wide range of cellular receptors including the LDL receptor/LDLR and the very low-density lipoprotein receptor/VLDLR that mediate the cellular uptake of the APOE-containing lipoprotein particles. Finally, APOE also has a heparin-binding activity and binds heparan-sulfate proteoglycans on the surface of cells, a property that supports the capture and the receptor-mediated uptake of APOE-containing lipoproteins by cells.</text>
</comment>
<comment type="subunit">
    <text evidence="1">Homotetramer. May interact with ABCA1; functionally associated with ABCA1 in the biogenesis of HDLs. May interact with APP/A4 amyloid-beta peptide; the interaction is extremely stable in vitro but its physiological significance is unclear. May interact with MAPT. May interact with MAP2. In the cerebrospinal fluid, interacts with secreted SORL1. Interacts with PMEL; this allows the loading of PMEL luminal fragment on ILVs to induce fibril nucleation.</text>
</comment>
<comment type="subcellular location">
    <subcellularLocation>
        <location evidence="1">Secreted</location>
    </subcellularLocation>
    <subcellularLocation>
        <location evidence="1">Secreted</location>
        <location evidence="1">Extracellular space</location>
    </subcellularLocation>
    <subcellularLocation>
        <location evidence="1">Secreted</location>
        <location evidence="1">Extracellular space</location>
        <location evidence="1">Extracellular matrix</location>
    </subcellularLocation>
    <subcellularLocation>
        <location evidence="1">Extracellular vesicle</location>
    </subcellularLocation>
    <subcellularLocation>
        <location evidence="1">Endosome</location>
        <location evidence="1">Multivesicular body</location>
    </subcellularLocation>
    <text evidence="1">In the plasma, APOE is associated with chylomicrons, chylomicrons remnants, VLDL, LDL and HDL lipoproteins. Lipid poor oligomeric APOE is associated with the extracellular matrix in a calcium- and heparan-sulfate proteoglycans-dependent manner. Lipidation induces the release from the extracellular matrix. Colocalizes with CD63 and PMEL at exosomes and in intraluminal vesicles within multivesicular endosomes.</text>
</comment>
<comment type="PTM">
    <text evidence="1">APOE exists as multiple glycosylated and sialylated glycoforms within cells and in plasma. The extent of glycosylation and sialylation are tissue and context specific.</text>
</comment>
<comment type="PTM">
    <text evidence="1">Glycated in plasma VLDL.</text>
</comment>
<comment type="PTM">
    <text evidence="1">Phosphorylated by FAM20C in the extracellular medium.</text>
</comment>
<comment type="similarity">
    <text evidence="4">Belongs to the apolipoprotein A1/A4/E family.</text>
</comment>